<sequence>MSFFNLDRFRFQRDNAVGIHRKSPDGSNSDKENKQAHQRKADGQFPSGKTSRQVLEDVSSDDEVVRMGKDSASDLQQHINKDMEDKIIKLLEIFPQKSKKDLLEVIENTSTLDGAVAHCLMIYGDEDSGGRKDKGGRSDDDDQPKKKRKIQRSDSSESEDEDSEDEESEEPSREKQEALLKKLKRKLPDIEKEVLRDILKEHDWDYENALGSLLVFSSTDTSSPENQKSKQKSKSSHSKEKTDKITQRPSGSSSLSRWLTAASSHVPEVSSMSALKTQKSALSKSTSKNSSFKRKRGDEMPLNDVSASEDEDEIDSDVDSMSDDQDSEDEDSISGTLQDKIIQFLQDASLDELALISGCSIKKAQKIISLRPFNTWKDVKEQFFKDNGLSIDLVHGCKVVLKERQVVLDLMGRCEKIAQKMTKDVTQVIEAGMGSIKQPKVLNSNLKLQAYQLIGLKWLILLHQHKLSGILADEMGLGKTIQAIAFLAHLYEKGIKGPHLITVPSSTLDNWVRELGLWCPSLKVLIYYGSVEDRKYLRQDILTGLIDFNIIVSTYNLTIGNDHDRSLFRKLKLKYAVFDEGHMLKNMNSLRYRHLMTINAEHRLLLTGTPLQNNLLELMSLLNFIMPSMFSSSTSQISKMFSTRSSEEESSFHKDRIAQARLIMKPFILRRVKSEVLKELPPKMEKIEMCPMSDAQHKLYDILFKRLKKTPNGDKRELCNVMMQLRKMANHPLLHRQYYTSDKLAAMSKAMLKEPTHYDADPALIQEDMEVMSDFELHNLCREYSSISGFQLEKALILDSGKFALLTKTLAKLKEKGDRVVLFSQFTMMLDIVEILLKHLDHQYVRLDGSTPMAERIGLIDKYNTNPEIFVFLLSTRAGGQGINLASANTVILHDIDCNPFNDKQAEDRCHRMGQTRTVQVIKLISKDSIEDCMLRVGQEKLKLEQDMTTDEGEDGAITEQMAELLKVSLGL</sequence>
<dbReference type="EC" id="3.6.4.12"/>
<dbReference type="EMBL" id="AL807792">
    <property type="protein sequence ID" value="CAQ14040.1"/>
    <property type="molecule type" value="Genomic_DNA"/>
</dbReference>
<dbReference type="SMR" id="B0R061"/>
<dbReference type="FunCoup" id="B0R061">
    <property type="interactions" value="2281"/>
</dbReference>
<dbReference type="STRING" id="7955.ENSDARP00000085842"/>
<dbReference type="PaxDb" id="7955-ENSDARP00000085842"/>
<dbReference type="PeptideAtlas" id="B0R061"/>
<dbReference type="Ensembl" id="ENSDART00000091409">
    <property type="protein sequence ID" value="ENSDARP00000085842"/>
    <property type="gene ID" value="ENSDARG00000014041"/>
</dbReference>
<dbReference type="AGR" id="ZFIN:ZDB-GENE-050522-499"/>
<dbReference type="ZFIN" id="ZDB-GENE-050522-499">
    <property type="gene designation" value="smarcad1a"/>
</dbReference>
<dbReference type="eggNOG" id="KOG0389">
    <property type="taxonomic scope" value="Eukaryota"/>
</dbReference>
<dbReference type="HOGENOM" id="CLU_000315_16_3_1"/>
<dbReference type="InParanoid" id="B0R061"/>
<dbReference type="OMA" id="MMLDVVE"/>
<dbReference type="PhylomeDB" id="B0R061"/>
<dbReference type="TreeFam" id="TF105768"/>
<dbReference type="PRO" id="PR:B0R061"/>
<dbReference type="Proteomes" id="UP000000437">
    <property type="component" value="Unplaced"/>
</dbReference>
<dbReference type="Bgee" id="ENSDARG00000014041">
    <property type="expression patterns" value="Expressed in cleaving embryo and 27 other cell types or tissues"/>
</dbReference>
<dbReference type="ExpressionAtlas" id="B0R061">
    <property type="expression patterns" value="baseline and differential"/>
</dbReference>
<dbReference type="GO" id="GO:0000785">
    <property type="term" value="C:chromatin"/>
    <property type="evidence" value="ECO:0000318"/>
    <property type="project" value="GO_Central"/>
</dbReference>
<dbReference type="GO" id="GO:0005634">
    <property type="term" value="C:nucleus"/>
    <property type="evidence" value="ECO:0000318"/>
    <property type="project" value="GO_Central"/>
</dbReference>
<dbReference type="GO" id="GO:0035861">
    <property type="term" value="C:site of double-strand break"/>
    <property type="evidence" value="ECO:0000250"/>
    <property type="project" value="UniProtKB"/>
</dbReference>
<dbReference type="GO" id="GO:0005524">
    <property type="term" value="F:ATP binding"/>
    <property type="evidence" value="ECO:0007669"/>
    <property type="project" value="UniProtKB-KW"/>
</dbReference>
<dbReference type="GO" id="GO:0016887">
    <property type="term" value="F:ATP hydrolysis activity"/>
    <property type="evidence" value="ECO:0007669"/>
    <property type="project" value="RHEA"/>
</dbReference>
<dbReference type="GO" id="GO:0140658">
    <property type="term" value="F:ATP-dependent chromatin remodeler activity"/>
    <property type="evidence" value="ECO:0000250"/>
    <property type="project" value="UniProtKB"/>
</dbReference>
<dbReference type="GO" id="GO:0003682">
    <property type="term" value="F:chromatin binding"/>
    <property type="evidence" value="ECO:0000318"/>
    <property type="project" value="GO_Central"/>
</dbReference>
<dbReference type="GO" id="GO:0003677">
    <property type="term" value="F:DNA binding"/>
    <property type="evidence" value="ECO:0000318"/>
    <property type="project" value="GO_Central"/>
</dbReference>
<dbReference type="GO" id="GO:0004386">
    <property type="term" value="F:helicase activity"/>
    <property type="evidence" value="ECO:0007669"/>
    <property type="project" value="UniProtKB-KW"/>
</dbReference>
<dbReference type="GO" id="GO:0140750">
    <property type="term" value="F:nucleosome array spacer activity"/>
    <property type="evidence" value="ECO:0000318"/>
    <property type="project" value="GO_Central"/>
</dbReference>
<dbReference type="GO" id="GO:0043130">
    <property type="term" value="F:ubiquitin binding"/>
    <property type="evidence" value="ECO:0007669"/>
    <property type="project" value="InterPro"/>
</dbReference>
<dbReference type="GO" id="GO:0000729">
    <property type="term" value="P:DNA double-strand break processing"/>
    <property type="evidence" value="ECO:0000250"/>
    <property type="project" value="UniProtKB"/>
</dbReference>
<dbReference type="GO" id="GO:0045944">
    <property type="term" value="P:positive regulation of transcription by RNA polymerase II"/>
    <property type="evidence" value="ECO:0000318"/>
    <property type="project" value="GO_Central"/>
</dbReference>
<dbReference type="CDD" id="cd14279">
    <property type="entry name" value="CUE"/>
    <property type="match status" value="1"/>
</dbReference>
<dbReference type="CDD" id="cd17998">
    <property type="entry name" value="DEXHc_SMARCAD1"/>
    <property type="match status" value="1"/>
</dbReference>
<dbReference type="CDD" id="cd18793">
    <property type="entry name" value="SF2_C_SNF"/>
    <property type="match status" value="1"/>
</dbReference>
<dbReference type="FunFam" id="3.40.50.10810:FF:000014">
    <property type="entry name" value="SWI/SNF-related matrix-associated actin-dependent regulator of chromatin subfamily A containing DEAD/H box 1"/>
    <property type="match status" value="1"/>
</dbReference>
<dbReference type="FunFam" id="3.40.50.300:FF:000639">
    <property type="entry name" value="SWI/SNF-related matrix-associated actin-dependent regulator of chromatin subfamily A containing DEAD/H box 1 isoform X1"/>
    <property type="match status" value="1"/>
</dbReference>
<dbReference type="Gene3D" id="3.40.50.300">
    <property type="entry name" value="P-loop containing nucleotide triphosphate hydrolases"/>
    <property type="match status" value="1"/>
</dbReference>
<dbReference type="Gene3D" id="3.40.50.10810">
    <property type="entry name" value="Tandem AAA-ATPase domain"/>
    <property type="match status" value="1"/>
</dbReference>
<dbReference type="InterPro" id="IPR003892">
    <property type="entry name" value="CUE"/>
</dbReference>
<dbReference type="InterPro" id="IPR014001">
    <property type="entry name" value="Helicase_ATP-bd"/>
</dbReference>
<dbReference type="InterPro" id="IPR001650">
    <property type="entry name" value="Helicase_C-like"/>
</dbReference>
<dbReference type="InterPro" id="IPR027417">
    <property type="entry name" value="P-loop_NTPase"/>
</dbReference>
<dbReference type="InterPro" id="IPR038718">
    <property type="entry name" value="SNF2-like_sf"/>
</dbReference>
<dbReference type="InterPro" id="IPR049730">
    <property type="entry name" value="SNF2/RAD54-like_C"/>
</dbReference>
<dbReference type="InterPro" id="IPR000330">
    <property type="entry name" value="SNF2_N"/>
</dbReference>
<dbReference type="InterPro" id="IPR009060">
    <property type="entry name" value="UBA-like_sf"/>
</dbReference>
<dbReference type="PANTHER" id="PTHR10799">
    <property type="entry name" value="SNF2/RAD54 HELICASE FAMILY"/>
    <property type="match status" value="1"/>
</dbReference>
<dbReference type="Pfam" id="PF00271">
    <property type="entry name" value="Helicase_C"/>
    <property type="match status" value="1"/>
</dbReference>
<dbReference type="Pfam" id="PF00176">
    <property type="entry name" value="SNF2-rel_dom"/>
    <property type="match status" value="1"/>
</dbReference>
<dbReference type="SMART" id="SM00487">
    <property type="entry name" value="DEXDc"/>
    <property type="match status" value="1"/>
</dbReference>
<dbReference type="SMART" id="SM00490">
    <property type="entry name" value="HELICc"/>
    <property type="match status" value="1"/>
</dbReference>
<dbReference type="SUPFAM" id="SSF52540">
    <property type="entry name" value="P-loop containing nucleoside triphosphate hydrolases"/>
    <property type="match status" value="2"/>
</dbReference>
<dbReference type="SUPFAM" id="SSF46934">
    <property type="entry name" value="UBA-like"/>
    <property type="match status" value="1"/>
</dbReference>
<dbReference type="PROSITE" id="PS51140">
    <property type="entry name" value="CUE"/>
    <property type="match status" value="2"/>
</dbReference>
<dbReference type="PROSITE" id="PS51192">
    <property type="entry name" value="HELICASE_ATP_BIND_1"/>
    <property type="match status" value="1"/>
</dbReference>
<dbReference type="PROSITE" id="PS51194">
    <property type="entry name" value="HELICASE_CTER"/>
    <property type="match status" value="1"/>
</dbReference>
<name>SMRDA_DANRE</name>
<feature type="chain" id="PRO_0000420484" description="SWI/SNF-related matrix-associated actin-dependent regulator of chromatin subfamily A containing DEAD/H box 1A">
    <location>
        <begin position="1"/>
        <end position="972"/>
    </location>
</feature>
<feature type="domain" description="CUE 1" evidence="2">
    <location>
        <begin position="82"/>
        <end position="127"/>
    </location>
</feature>
<feature type="domain" description="CUE 2" evidence="2">
    <location>
        <begin position="175"/>
        <end position="218"/>
    </location>
</feature>
<feature type="domain" description="Helicase ATP-binding" evidence="3">
    <location>
        <begin position="460"/>
        <end position="628"/>
    </location>
</feature>
<feature type="domain" description="Helicase C-terminal" evidence="4">
    <location>
        <begin position="805"/>
        <end position="966"/>
    </location>
</feature>
<feature type="region of interest" description="Disordered" evidence="5">
    <location>
        <begin position="15"/>
        <end position="76"/>
    </location>
</feature>
<feature type="region of interest" description="Disordered" evidence="5">
    <location>
        <begin position="125"/>
        <end position="177"/>
    </location>
</feature>
<feature type="region of interest" description="Disordered" evidence="5">
    <location>
        <begin position="217"/>
        <end position="333"/>
    </location>
</feature>
<feature type="short sequence motif" description="DEGH box">
    <location>
        <begin position="579"/>
        <end position="582"/>
    </location>
</feature>
<feature type="compositionally biased region" description="Basic and acidic residues" evidence="5">
    <location>
        <begin position="22"/>
        <end position="42"/>
    </location>
</feature>
<feature type="compositionally biased region" description="Basic and acidic residues" evidence="5">
    <location>
        <begin position="63"/>
        <end position="72"/>
    </location>
</feature>
<feature type="compositionally biased region" description="Basic and acidic residues" evidence="5">
    <location>
        <begin position="128"/>
        <end position="138"/>
    </location>
</feature>
<feature type="compositionally biased region" description="Acidic residues" evidence="5">
    <location>
        <begin position="156"/>
        <end position="169"/>
    </location>
</feature>
<feature type="compositionally biased region" description="Basic and acidic residues" evidence="5">
    <location>
        <begin position="237"/>
        <end position="246"/>
    </location>
</feature>
<feature type="compositionally biased region" description="Polar residues" evidence="5">
    <location>
        <begin position="247"/>
        <end position="263"/>
    </location>
</feature>
<feature type="compositionally biased region" description="Low complexity" evidence="5">
    <location>
        <begin position="279"/>
        <end position="290"/>
    </location>
</feature>
<feature type="compositionally biased region" description="Acidic residues" evidence="5">
    <location>
        <begin position="307"/>
        <end position="332"/>
    </location>
</feature>
<feature type="binding site" evidence="3">
    <location>
        <begin position="473"/>
        <end position="480"/>
    </location>
    <ligand>
        <name>ATP</name>
        <dbReference type="ChEBI" id="CHEBI:30616"/>
    </ligand>
</feature>
<comment type="function">
    <text evidence="1">DNA helicase that possesses intrinsic ATP-dependent nucleosome-remodeling activity and is both required for DNA repair and heterochromatin organization. Promotes DNA end resection of double-strand breaks (DSBs) following DNA damage: probably acts by weakening histone DNA interactions in nucleosomes flanking DSBs. Required for the restoration of heterochromatin organization after replication (By similarity).</text>
</comment>
<comment type="catalytic activity">
    <reaction evidence="1">
        <text>ATP + H2O = ADP + phosphate + H(+)</text>
        <dbReference type="Rhea" id="RHEA:13065"/>
        <dbReference type="ChEBI" id="CHEBI:15377"/>
        <dbReference type="ChEBI" id="CHEBI:15378"/>
        <dbReference type="ChEBI" id="CHEBI:30616"/>
        <dbReference type="ChEBI" id="CHEBI:43474"/>
        <dbReference type="ChEBI" id="CHEBI:456216"/>
        <dbReference type="EC" id="3.6.4.12"/>
    </reaction>
    <physiologicalReaction direction="left-to-right" evidence="1">
        <dbReference type="Rhea" id="RHEA:13066"/>
    </physiologicalReaction>
</comment>
<comment type="subcellular location">
    <subcellularLocation>
        <location evidence="1">Nucleus</location>
    </subcellularLocation>
    <subcellularLocation>
        <location evidence="1">Chromosome</location>
    </subcellularLocation>
    <text evidence="1">Colocalizes with PCNA at replication forks during S phase. Recruited to double-strand breaks (DSBs) sites of DNA damage (By similarity).</text>
</comment>
<comment type="similarity">
    <text evidence="6">Belongs to the SNF2/RAD54 helicase family.</text>
</comment>
<organism>
    <name type="scientific">Danio rerio</name>
    <name type="common">Zebrafish</name>
    <name type="synonym">Brachydanio rerio</name>
    <dbReference type="NCBI Taxonomy" id="7955"/>
    <lineage>
        <taxon>Eukaryota</taxon>
        <taxon>Metazoa</taxon>
        <taxon>Chordata</taxon>
        <taxon>Craniata</taxon>
        <taxon>Vertebrata</taxon>
        <taxon>Euteleostomi</taxon>
        <taxon>Actinopterygii</taxon>
        <taxon>Neopterygii</taxon>
        <taxon>Teleostei</taxon>
        <taxon>Ostariophysi</taxon>
        <taxon>Cypriniformes</taxon>
        <taxon>Danionidae</taxon>
        <taxon>Danioninae</taxon>
        <taxon>Danio</taxon>
    </lineage>
</organism>
<proteinExistence type="inferred from homology"/>
<reference key="1">
    <citation type="journal article" date="2013" name="Nature">
        <title>The zebrafish reference genome sequence and its relationship to the human genome.</title>
        <authorList>
            <person name="Howe K."/>
            <person name="Clark M.D."/>
            <person name="Torroja C.F."/>
            <person name="Torrance J."/>
            <person name="Berthelot C."/>
            <person name="Muffato M."/>
            <person name="Collins J.E."/>
            <person name="Humphray S."/>
            <person name="McLaren K."/>
            <person name="Matthews L."/>
            <person name="McLaren S."/>
            <person name="Sealy I."/>
            <person name="Caccamo M."/>
            <person name="Churcher C."/>
            <person name="Scott C."/>
            <person name="Barrett J.C."/>
            <person name="Koch R."/>
            <person name="Rauch G.J."/>
            <person name="White S."/>
            <person name="Chow W."/>
            <person name="Kilian B."/>
            <person name="Quintais L.T."/>
            <person name="Guerra-Assuncao J.A."/>
            <person name="Zhou Y."/>
            <person name="Gu Y."/>
            <person name="Yen J."/>
            <person name="Vogel J.H."/>
            <person name="Eyre T."/>
            <person name="Redmond S."/>
            <person name="Banerjee R."/>
            <person name="Chi J."/>
            <person name="Fu B."/>
            <person name="Langley E."/>
            <person name="Maguire S.F."/>
            <person name="Laird G.K."/>
            <person name="Lloyd D."/>
            <person name="Kenyon E."/>
            <person name="Donaldson S."/>
            <person name="Sehra H."/>
            <person name="Almeida-King J."/>
            <person name="Loveland J."/>
            <person name="Trevanion S."/>
            <person name="Jones M."/>
            <person name="Quail M."/>
            <person name="Willey D."/>
            <person name="Hunt A."/>
            <person name="Burton J."/>
            <person name="Sims S."/>
            <person name="McLay K."/>
            <person name="Plumb B."/>
            <person name="Davis J."/>
            <person name="Clee C."/>
            <person name="Oliver K."/>
            <person name="Clark R."/>
            <person name="Riddle C."/>
            <person name="Elliot D."/>
            <person name="Threadgold G."/>
            <person name="Harden G."/>
            <person name="Ware D."/>
            <person name="Begum S."/>
            <person name="Mortimore B."/>
            <person name="Kerry G."/>
            <person name="Heath P."/>
            <person name="Phillimore B."/>
            <person name="Tracey A."/>
            <person name="Corby N."/>
            <person name="Dunn M."/>
            <person name="Johnson C."/>
            <person name="Wood J."/>
            <person name="Clark S."/>
            <person name="Pelan S."/>
            <person name="Griffiths G."/>
            <person name="Smith M."/>
            <person name="Glithero R."/>
            <person name="Howden P."/>
            <person name="Barker N."/>
            <person name="Lloyd C."/>
            <person name="Stevens C."/>
            <person name="Harley J."/>
            <person name="Holt K."/>
            <person name="Panagiotidis G."/>
            <person name="Lovell J."/>
            <person name="Beasley H."/>
            <person name="Henderson C."/>
            <person name="Gordon D."/>
            <person name="Auger K."/>
            <person name="Wright D."/>
            <person name="Collins J."/>
            <person name="Raisen C."/>
            <person name="Dyer L."/>
            <person name="Leung K."/>
            <person name="Robertson L."/>
            <person name="Ambridge K."/>
            <person name="Leongamornlert D."/>
            <person name="McGuire S."/>
            <person name="Gilderthorp R."/>
            <person name="Griffiths C."/>
            <person name="Manthravadi D."/>
            <person name="Nichol S."/>
            <person name="Barker G."/>
            <person name="Whitehead S."/>
            <person name="Kay M."/>
            <person name="Brown J."/>
            <person name="Murnane C."/>
            <person name="Gray E."/>
            <person name="Humphries M."/>
            <person name="Sycamore N."/>
            <person name="Barker D."/>
            <person name="Saunders D."/>
            <person name="Wallis J."/>
            <person name="Babbage A."/>
            <person name="Hammond S."/>
            <person name="Mashreghi-Mohammadi M."/>
            <person name="Barr L."/>
            <person name="Martin S."/>
            <person name="Wray P."/>
            <person name="Ellington A."/>
            <person name="Matthews N."/>
            <person name="Ellwood M."/>
            <person name="Woodmansey R."/>
            <person name="Clark G."/>
            <person name="Cooper J."/>
            <person name="Tromans A."/>
            <person name="Grafham D."/>
            <person name="Skuce C."/>
            <person name="Pandian R."/>
            <person name="Andrews R."/>
            <person name="Harrison E."/>
            <person name="Kimberley A."/>
            <person name="Garnett J."/>
            <person name="Fosker N."/>
            <person name="Hall R."/>
            <person name="Garner P."/>
            <person name="Kelly D."/>
            <person name="Bird C."/>
            <person name="Palmer S."/>
            <person name="Gehring I."/>
            <person name="Berger A."/>
            <person name="Dooley C.M."/>
            <person name="Ersan-Urun Z."/>
            <person name="Eser C."/>
            <person name="Geiger H."/>
            <person name="Geisler M."/>
            <person name="Karotki L."/>
            <person name="Kirn A."/>
            <person name="Konantz J."/>
            <person name="Konantz M."/>
            <person name="Oberlander M."/>
            <person name="Rudolph-Geiger S."/>
            <person name="Teucke M."/>
            <person name="Lanz C."/>
            <person name="Raddatz G."/>
            <person name="Osoegawa K."/>
            <person name="Zhu B."/>
            <person name="Rapp A."/>
            <person name="Widaa S."/>
            <person name="Langford C."/>
            <person name="Yang F."/>
            <person name="Schuster S.C."/>
            <person name="Carter N.P."/>
            <person name="Harrow J."/>
            <person name="Ning Z."/>
            <person name="Herrero J."/>
            <person name="Searle S.M."/>
            <person name="Enright A."/>
            <person name="Geisler R."/>
            <person name="Plasterk R.H."/>
            <person name="Lee C."/>
            <person name="Westerfield M."/>
            <person name="de Jong P.J."/>
            <person name="Zon L.I."/>
            <person name="Postlethwait J.H."/>
            <person name="Nusslein-Volhard C."/>
            <person name="Hubbard T.J."/>
            <person name="Roest Crollius H."/>
            <person name="Rogers J."/>
            <person name="Stemple D.L."/>
        </authorList>
    </citation>
    <scope>NUCLEOTIDE SEQUENCE [LARGE SCALE GENOMIC DNA]</scope>
    <source>
        <strain>Tuebingen</strain>
    </source>
</reference>
<protein>
    <recommendedName>
        <fullName>SWI/SNF-related matrix-associated actin-dependent regulator of chromatin subfamily A containing DEAD/H box 1A</fullName>
        <ecNumber>3.6.4.12</ecNumber>
    </recommendedName>
</protein>
<keyword id="KW-0067">ATP-binding</keyword>
<keyword id="KW-0156">Chromatin regulator</keyword>
<keyword id="KW-0158">Chromosome</keyword>
<keyword id="KW-0227">DNA damage</keyword>
<keyword id="KW-0234">DNA repair</keyword>
<keyword id="KW-0238">DNA-binding</keyword>
<keyword id="KW-0347">Helicase</keyword>
<keyword id="KW-0378">Hydrolase</keyword>
<keyword id="KW-0547">Nucleotide-binding</keyword>
<keyword id="KW-0539">Nucleus</keyword>
<keyword id="KW-1185">Reference proteome</keyword>
<keyword id="KW-0677">Repeat</keyword>
<evidence type="ECO:0000250" key="1">
    <source>
        <dbReference type="UniProtKB" id="Q9H4L7"/>
    </source>
</evidence>
<evidence type="ECO:0000255" key="2">
    <source>
        <dbReference type="PROSITE-ProRule" id="PRU00468"/>
    </source>
</evidence>
<evidence type="ECO:0000255" key="3">
    <source>
        <dbReference type="PROSITE-ProRule" id="PRU00541"/>
    </source>
</evidence>
<evidence type="ECO:0000255" key="4">
    <source>
        <dbReference type="PROSITE-ProRule" id="PRU00542"/>
    </source>
</evidence>
<evidence type="ECO:0000256" key="5">
    <source>
        <dbReference type="SAM" id="MobiDB-lite"/>
    </source>
</evidence>
<evidence type="ECO:0000305" key="6"/>
<gene>
    <name type="primary">smarcad1a</name>
    <name type="synonym">smarcad1</name>
    <name type="ORF">si:ch211-247l22.2</name>
    <name type="ORF">zgc:113183</name>
</gene>
<accession>B0R061</accession>